<name>TOM6_BOVIN</name>
<accession>Q56JY4</accession>
<protein>
    <recommendedName>
        <fullName>Mitochondrial import receptor subunit TOM6 homolog</fullName>
    </recommendedName>
    <alternativeName>
        <fullName>Overexpressed breast tumor protein homolog</fullName>
    </alternativeName>
    <alternativeName>
        <fullName>Translocase of outer membrane 6 kDa subunit homolog</fullName>
    </alternativeName>
</protein>
<evidence type="ECO:0000250" key="1"/>
<evidence type="ECO:0000250" key="2">
    <source>
        <dbReference type="UniProtKB" id="Q96B49"/>
    </source>
</evidence>
<evidence type="ECO:0000256" key="3">
    <source>
        <dbReference type="SAM" id="MobiDB-lite"/>
    </source>
</evidence>
<evidence type="ECO:0000305" key="4"/>
<comment type="subunit">
    <text evidence="1">Forms part of the preprotein translocase complex of the outer mitochondrial membrane (TOM complex) which consists of at least 7 different proteins (TOMM5, TOMM6, TOMM7, TOMM20, TOMM22, TOMM40 and TOMM70).</text>
</comment>
<comment type="subcellular location">
    <subcellularLocation>
        <location evidence="1">Mitochondrion outer membrane</location>
    </subcellularLocation>
</comment>
<comment type="similarity">
    <text evidence="4">Belongs to the Tom6 family.</text>
</comment>
<proteinExistence type="inferred from homology"/>
<reference key="1">
    <citation type="submission" date="2005-01" db="EMBL/GenBank/DDBJ databases">
        <title>Analysis of sequences obtained from constructed full-length bovine cDNA libraries.</title>
        <authorList>
            <person name="Yu J."/>
            <person name="Meng Y."/>
            <person name="Wang Z."/>
            <person name="Hansen C."/>
            <person name="Li C."/>
            <person name="Moore S.S."/>
        </authorList>
    </citation>
    <scope>NUCLEOTIDE SEQUENCE [LARGE SCALE MRNA]</scope>
    <source>
        <tissue>Lymphoid epithelium</tissue>
    </source>
</reference>
<reference key="2">
    <citation type="submission" date="2005-11" db="EMBL/GenBank/DDBJ databases">
        <authorList>
            <consortium name="NIH - Mammalian Gene Collection (MGC) project"/>
        </authorList>
    </citation>
    <scope>NUCLEOTIDE SEQUENCE [LARGE SCALE MRNA]</scope>
    <source>
        <strain>Crossbred X Angus</strain>
        <tissue>Liver</tissue>
    </source>
</reference>
<sequence length="74" mass="7874">MASSGAGVTAAGSANEAPEIPDNVGDWLRGVYRFATDRNDFRRNLILNLGLFAAGVWLARNLSDIDLMAPQPGV</sequence>
<organism>
    <name type="scientific">Bos taurus</name>
    <name type="common">Bovine</name>
    <dbReference type="NCBI Taxonomy" id="9913"/>
    <lineage>
        <taxon>Eukaryota</taxon>
        <taxon>Metazoa</taxon>
        <taxon>Chordata</taxon>
        <taxon>Craniata</taxon>
        <taxon>Vertebrata</taxon>
        <taxon>Euteleostomi</taxon>
        <taxon>Mammalia</taxon>
        <taxon>Eutheria</taxon>
        <taxon>Laurasiatheria</taxon>
        <taxon>Artiodactyla</taxon>
        <taxon>Ruminantia</taxon>
        <taxon>Pecora</taxon>
        <taxon>Bovidae</taxon>
        <taxon>Bovinae</taxon>
        <taxon>Bos</taxon>
    </lineage>
</organism>
<gene>
    <name type="primary">TOMM6</name>
    <name type="synonym">OBTP</name>
    <name type="synonym">TOM6</name>
</gene>
<keyword id="KW-0007">Acetylation</keyword>
<keyword id="KW-0472">Membrane</keyword>
<keyword id="KW-0496">Mitochondrion</keyword>
<keyword id="KW-1000">Mitochondrion outer membrane</keyword>
<keyword id="KW-0653">Protein transport</keyword>
<keyword id="KW-1185">Reference proteome</keyword>
<keyword id="KW-0813">Transport</keyword>
<dbReference type="EMBL" id="AY911344">
    <property type="protein sequence ID" value="AAW82111.1"/>
    <property type="molecule type" value="mRNA"/>
</dbReference>
<dbReference type="EMBL" id="BC109531">
    <property type="protein sequence ID" value="AAI09532.1"/>
    <property type="molecule type" value="mRNA"/>
</dbReference>
<dbReference type="RefSeq" id="NP_001107190.1">
    <property type="nucleotide sequence ID" value="NM_001113718.2"/>
</dbReference>
<dbReference type="SMR" id="Q56JY4"/>
<dbReference type="FunCoup" id="Q56JY4">
    <property type="interactions" value="639"/>
</dbReference>
<dbReference type="STRING" id="9913.ENSBTAP00000011817"/>
<dbReference type="PaxDb" id="9913-ENSBTAP00000011817"/>
<dbReference type="Ensembl" id="ENSBTAT00000011817.4">
    <property type="protein sequence ID" value="ENSBTAP00000011817.3"/>
    <property type="gene ID" value="ENSBTAG00000008977.4"/>
</dbReference>
<dbReference type="GeneID" id="505031"/>
<dbReference type="KEGG" id="bta:505031"/>
<dbReference type="CTD" id="100188893"/>
<dbReference type="VEuPathDB" id="HostDB:ENSBTAG00000008977"/>
<dbReference type="eggNOG" id="ENOG502S9AX">
    <property type="taxonomic scope" value="Eukaryota"/>
</dbReference>
<dbReference type="GeneTree" id="ENSGT00390000002376"/>
<dbReference type="HOGENOM" id="CLU_2687147_0_0_1"/>
<dbReference type="InParanoid" id="Q56JY4"/>
<dbReference type="OMA" id="WIRGAYR"/>
<dbReference type="OrthoDB" id="6016677at2759"/>
<dbReference type="TreeFam" id="TF330716"/>
<dbReference type="Reactome" id="R-BTA-5205685">
    <property type="pathway name" value="PINK1-PRKN Mediated Mitophagy"/>
</dbReference>
<dbReference type="Proteomes" id="UP000009136">
    <property type="component" value="Chromosome 23"/>
</dbReference>
<dbReference type="Bgee" id="ENSBTAG00000008977">
    <property type="expression patterns" value="Expressed in oocyte and 103 other cell types or tissues"/>
</dbReference>
<dbReference type="GO" id="GO:0005742">
    <property type="term" value="C:mitochondrial outer membrane translocase complex"/>
    <property type="evidence" value="ECO:0007669"/>
    <property type="project" value="InterPro"/>
</dbReference>
<dbReference type="GO" id="GO:0005739">
    <property type="term" value="C:mitochondrion"/>
    <property type="evidence" value="ECO:0000318"/>
    <property type="project" value="GO_Central"/>
</dbReference>
<dbReference type="GO" id="GO:0015031">
    <property type="term" value="P:protein transport"/>
    <property type="evidence" value="ECO:0007669"/>
    <property type="project" value="UniProtKB-KW"/>
</dbReference>
<dbReference type="InterPro" id="IPR029182">
    <property type="entry name" value="TOMM6"/>
</dbReference>
<dbReference type="PANTHER" id="PTHR15527">
    <property type="entry name" value="MITOCHONDRIAL IMPORT RECEPTOR SUBUNIT TOM6 HOMOLOG"/>
    <property type="match status" value="1"/>
</dbReference>
<dbReference type="PANTHER" id="PTHR15527:SF0">
    <property type="entry name" value="MITOCHONDRIAL IMPORT RECEPTOR SUBUNIT TOM6 HOMOLOG"/>
    <property type="match status" value="1"/>
</dbReference>
<dbReference type="Pfam" id="PF15184">
    <property type="entry name" value="TOM6p"/>
    <property type="match status" value="1"/>
</dbReference>
<feature type="initiator methionine" description="Removed" evidence="2">
    <location>
        <position position="1"/>
    </location>
</feature>
<feature type="chain" id="PRO_0000302855" description="Mitochondrial import receptor subunit TOM6 homolog">
    <location>
        <begin position="2"/>
        <end position="74"/>
    </location>
</feature>
<feature type="region of interest" description="Disordered" evidence="3">
    <location>
        <begin position="1"/>
        <end position="24"/>
    </location>
</feature>
<feature type="compositionally biased region" description="Low complexity" evidence="3">
    <location>
        <begin position="1"/>
        <end position="14"/>
    </location>
</feature>
<feature type="modified residue" description="N-acetylalanine" evidence="2">
    <location>
        <position position="2"/>
    </location>
</feature>